<gene>
    <name evidence="1" type="primary">truA</name>
    <name type="ordered locus">GSU2877</name>
</gene>
<sequence>MRTIKLILEYDGTNYAGWQLQPNGLSIQEVVEGALARLLKEPVRLRASGRTDAGVHARGMVAAFDTDRSIPLRAFSDGLNALLPPDIAVRSADEALPGFNPRFAATGKHYRYTIHRGERRSPLVRLQSWHVRGALNLAAMREAARHLTGERDFASFRTAGCAARTTIRRVDAVEISDDGEMLTVDVHGSGFLRNMVRIMVGTLVEVGRGKLTPEHVAQMVVCPGVVPAGPTAPPQGLCLQKVRF</sequence>
<evidence type="ECO:0000255" key="1">
    <source>
        <dbReference type="HAMAP-Rule" id="MF_00171"/>
    </source>
</evidence>
<organism>
    <name type="scientific">Geobacter sulfurreducens (strain ATCC 51573 / DSM 12127 / PCA)</name>
    <dbReference type="NCBI Taxonomy" id="243231"/>
    <lineage>
        <taxon>Bacteria</taxon>
        <taxon>Pseudomonadati</taxon>
        <taxon>Thermodesulfobacteriota</taxon>
        <taxon>Desulfuromonadia</taxon>
        <taxon>Geobacterales</taxon>
        <taxon>Geobacteraceae</taxon>
        <taxon>Geobacter</taxon>
    </lineage>
</organism>
<comment type="function">
    <text evidence="1">Formation of pseudouridine at positions 38, 39 and 40 in the anticodon stem and loop of transfer RNAs.</text>
</comment>
<comment type="catalytic activity">
    <reaction evidence="1">
        <text>uridine(38/39/40) in tRNA = pseudouridine(38/39/40) in tRNA</text>
        <dbReference type="Rhea" id="RHEA:22376"/>
        <dbReference type="Rhea" id="RHEA-COMP:10085"/>
        <dbReference type="Rhea" id="RHEA-COMP:10087"/>
        <dbReference type="ChEBI" id="CHEBI:65314"/>
        <dbReference type="ChEBI" id="CHEBI:65315"/>
        <dbReference type="EC" id="5.4.99.12"/>
    </reaction>
</comment>
<comment type="subunit">
    <text evidence="1">Homodimer.</text>
</comment>
<comment type="similarity">
    <text evidence="1">Belongs to the tRNA pseudouridine synthase TruA family.</text>
</comment>
<reference key="1">
    <citation type="journal article" date="2003" name="Science">
        <title>Genome of Geobacter sulfurreducens: metal reduction in subsurface environments.</title>
        <authorList>
            <person name="Methe B.A."/>
            <person name="Nelson K.E."/>
            <person name="Eisen J.A."/>
            <person name="Paulsen I.T."/>
            <person name="Nelson W.C."/>
            <person name="Heidelberg J.F."/>
            <person name="Wu D."/>
            <person name="Wu M."/>
            <person name="Ward N.L."/>
            <person name="Beanan M.J."/>
            <person name="Dodson R.J."/>
            <person name="Madupu R."/>
            <person name="Brinkac L.M."/>
            <person name="Daugherty S.C."/>
            <person name="DeBoy R.T."/>
            <person name="Durkin A.S."/>
            <person name="Gwinn M.L."/>
            <person name="Kolonay J.F."/>
            <person name="Sullivan S.A."/>
            <person name="Haft D.H."/>
            <person name="Selengut J."/>
            <person name="Davidsen T.M."/>
            <person name="Zafar N."/>
            <person name="White O."/>
            <person name="Tran B."/>
            <person name="Romero C."/>
            <person name="Forberger H.A."/>
            <person name="Weidman J.F."/>
            <person name="Khouri H.M."/>
            <person name="Feldblyum T.V."/>
            <person name="Utterback T.R."/>
            <person name="Van Aken S.E."/>
            <person name="Lovley D.R."/>
            <person name="Fraser C.M."/>
        </authorList>
    </citation>
    <scope>NUCLEOTIDE SEQUENCE [LARGE SCALE GENOMIC DNA]</scope>
    <source>
        <strain>ATCC 51573 / DSM 12127 / PCA</strain>
    </source>
</reference>
<proteinExistence type="inferred from homology"/>
<protein>
    <recommendedName>
        <fullName evidence="1">tRNA pseudouridine synthase A</fullName>
        <ecNumber evidence="1">5.4.99.12</ecNumber>
    </recommendedName>
    <alternativeName>
        <fullName evidence="1">tRNA pseudouridine(38-40) synthase</fullName>
    </alternativeName>
    <alternativeName>
        <fullName evidence="1">tRNA pseudouridylate synthase I</fullName>
    </alternativeName>
    <alternativeName>
        <fullName evidence="1">tRNA-uridine isomerase I</fullName>
    </alternativeName>
</protein>
<keyword id="KW-0413">Isomerase</keyword>
<keyword id="KW-1185">Reference proteome</keyword>
<keyword id="KW-0819">tRNA processing</keyword>
<name>TRUA_GEOSL</name>
<feature type="chain" id="PRO_0000057384" description="tRNA pseudouridine synthase A">
    <location>
        <begin position="1"/>
        <end position="244"/>
    </location>
</feature>
<feature type="active site" description="Nucleophile" evidence="1">
    <location>
        <position position="52"/>
    </location>
</feature>
<feature type="binding site" evidence="1">
    <location>
        <position position="110"/>
    </location>
    <ligand>
        <name>substrate</name>
    </ligand>
</feature>
<dbReference type="EC" id="5.4.99.12" evidence="1"/>
<dbReference type="EMBL" id="AE017180">
    <property type="protein sequence ID" value="AAR36269.1"/>
    <property type="molecule type" value="Genomic_DNA"/>
</dbReference>
<dbReference type="RefSeq" id="NP_953919.1">
    <property type="nucleotide sequence ID" value="NC_002939.5"/>
</dbReference>
<dbReference type="RefSeq" id="WP_010943506.1">
    <property type="nucleotide sequence ID" value="NC_002939.5"/>
</dbReference>
<dbReference type="SMR" id="P60350"/>
<dbReference type="FunCoup" id="P60350">
    <property type="interactions" value="482"/>
</dbReference>
<dbReference type="STRING" id="243231.GSU2877"/>
<dbReference type="EnsemblBacteria" id="AAR36269">
    <property type="protein sequence ID" value="AAR36269"/>
    <property type="gene ID" value="GSU2877"/>
</dbReference>
<dbReference type="KEGG" id="gsu:GSU2877"/>
<dbReference type="PATRIC" id="fig|243231.5.peg.2905"/>
<dbReference type="eggNOG" id="COG0101">
    <property type="taxonomic scope" value="Bacteria"/>
</dbReference>
<dbReference type="HOGENOM" id="CLU_014673_0_1_7"/>
<dbReference type="InParanoid" id="P60350"/>
<dbReference type="OrthoDB" id="9811823at2"/>
<dbReference type="Proteomes" id="UP000000577">
    <property type="component" value="Chromosome"/>
</dbReference>
<dbReference type="GO" id="GO:0009982">
    <property type="term" value="F:pseudouridine synthase activity"/>
    <property type="evidence" value="ECO:0000318"/>
    <property type="project" value="GO_Central"/>
</dbReference>
<dbReference type="GO" id="GO:0003723">
    <property type="term" value="F:RNA binding"/>
    <property type="evidence" value="ECO:0007669"/>
    <property type="project" value="InterPro"/>
</dbReference>
<dbReference type="GO" id="GO:0160147">
    <property type="term" value="F:tRNA pseudouridine(38-40) synthase activity"/>
    <property type="evidence" value="ECO:0007669"/>
    <property type="project" value="UniProtKB-EC"/>
</dbReference>
<dbReference type="GO" id="GO:0031119">
    <property type="term" value="P:tRNA pseudouridine synthesis"/>
    <property type="evidence" value="ECO:0000318"/>
    <property type="project" value="GO_Central"/>
</dbReference>
<dbReference type="CDD" id="cd02570">
    <property type="entry name" value="PseudoU_synth_EcTruA"/>
    <property type="match status" value="1"/>
</dbReference>
<dbReference type="FunFam" id="3.30.70.580:FF:000001">
    <property type="entry name" value="tRNA pseudouridine synthase A"/>
    <property type="match status" value="1"/>
</dbReference>
<dbReference type="Gene3D" id="3.30.70.660">
    <property type="entry name" value="Pseudouridine synthase I, catalytic domain, C-terminal subdomain"/>
    <property type="match status" value="1"/>
</dbReference>
<dbReference type="Gene3D" id="3.30.70.580">
    <property type="entry name" value="Pseudouridine synthase I, catalytic domain, N-terminal subdomain"/>
    <property type="match status" value="1"/>
</dbReference>
<dbReference type="HAMAP" id="MF_00171">
    <property type="entry name" value="TruA"/>
    <property type="match status" value="1"/>
</dbReference>
<dbReference type="InterPro" id="IPR020103">
    <property type="entry name" value="PsdUridine_synth_cat_dom_sf"/>
</dbReference>
<dbReference type="InterPro" id="IPR001406">
    <property type="entry name" value="PsdUridine_synth_TruA"/>
</dbReference>
<dbReference type="InterPro" id="IPR020097">
    <property type="entry name" value="PsdUridine_synth_TruA_a/b_dom"/>
</dbReference>
<dbReference type="InterPro" id="IPR020095">
    <property type="entry name" value="PsdUridine_synth_TruA_C"/>
</dbReference>
<dbReference type="InterPro" id="IPR020094">
    <property type="entry name" value="TruA/RsuA/RluB/E/F_N"/>
</dbReference>
<dbReference type="NCBIfam" id="TIGR00071">
    <property type="entry name" value="hisT_truA"/>
    <property type="match status" value="1"/>
</dbReference>
<dbReference type="PANTHER" id="PTHR11142">
    <property type="entry name" value="PSEUDOURIDYLATE SYNTHASE"/>
    <property type="match status" value="1"/>
</dbReference>
<dbReference type="PANTHER" id="PTHR11142:SF0">
    <property type="entry name" value="TRNA PSEUDOURIDINE SYNTHASE-LIKE 1"/>
    <property type="match status" value="1"/>
</dbReference>
<dbReference type="Pfam" id="PF01416">
    <property type="entry name" value="PseudoU_synth_1"/>
    <property type="match status" value="2"/>
</dbReference>
<dbReference type="PIRSF" id="PIRSF001430">
    <property type="entry name" value="tRNA_psdUrid_synth"/>
    <property type="match status" value="1"/>
</dbReference>
<dbReference type="SUPFAM" id="SSF55120">
    <property type="entry name" value="Pseudouridine synthase"/>
    <property type="match status" value="1"/>
</dbReference>
<accession>P60350</accession>